<reference key="1">
    <citation type="journal article" date="2004" name="Proc. Natl. Acad. Sci. U.S.A.">
        <title>Complete genomes of two clinical Staphylococcus aureus strains: evidence for the rapid evolution of virulence and drug resistance.</title>
        <authorList>
            <person name="Holden M.T.G."/>
            <person name="Feil E.J."/>
            <person name="Lindsay J.A."/>
            <person name="Peacock S.J."/>
            <person name="Day N.P.J."/>
            <person name="Enright M.C."/>
            <person name="Foster T.J."/>
            <person name="Moore C.E."/>
            <person name="Hurst L."/>
            <person name="Atkin R."/>
            <person name="Barron A."/>
            <person name="Bason N."/>
            <person name="Bentley S.D."/>
            <person name="Chillingworth C."/>
            <person name="Chillingworth T."/>
            <person name="Churcher C."/>
            <person name="Clark L."/>
            <person name="Corton C."/>
            <person name="Cronin A."/>
            <person name="Doggett J."/>
            <person name="Dowd L."/>
            <person name="Feltwell T."/>
            <person name="Hance Z."/>
            <person name="Harris B."/>
            <person name="Hauser H."/>
            <person name="Holroyd S."/>
            <person name="Jagels K."/>
            <person name="James K.D."/>
            <person name="Lennard N."/>
            <person name="Line A."/>
            <person name="Mayes R."/>
            <person name="Moule S."/>
            <person name="Mungall K."/>
            <person name="Ormond D."/>
            <person name="Quail M.A."/>
            <person name="Rabbinowitsch E."/>
            <person name="Rutherford K.M."/>
            <person name="Sanders M."/>
            <person name="Sharp S."/>
            <person name="Simmonds M."/>
            <person name="Stevens K."/>
            <person name="Whitehead S."/>
            <person name="Barrell B.G."/>
            <person name="Spratt B.G."/>
            <person name="Parkhill J."/>
        </authorList>
    </citation>
    <scope>NUCLEOTIDE SEQUENCE [LARGE SCALE GENOMIC DNA]</scope>
    <source>
        <strain>MSSA476</strain>
    </source>
</reference>
<name>MNHG2_STAAS</name>
<accession>Q6GBK1</accession>
<protein>
    <recommendedName>
        <fullName>Putative antiporter subunit mnhG2</fullName>
    </recommendedName>
    <alternativeName>
        <fullName>Mrp complex subunit G2</fullName>
    </alternativeName>
    <alternativeName>
        <fullName>Putative NADH-ubiquinone oxidoreductase subunit mnhF2</fullName>
    </alternativeName>
</protein>
<dbReference type="EMBL" id="BX571857">
    <property type="protein sequence ID" value="CAG42370.1"/>
    <property type="molecule type" value="Genomic_DNA"/>
</dbReference>
<dbReference type="RefSeq" id="WP_000406611.1">
    <property type="nucleotide sequence ID" value="NC_002953.3"/>
</dbReference>
<dbReference type="SMR" id="Q6GBK1"/>
<dbReference type="KEGG" id="sas:SAS0595"/>
<dbReference type="HOGENOM" id="CLU_121334_0_3_9"/>
<dbReference type="GO" id="GO:0005886">
    <property type="term" value="C:plasma membrane"/>
    <property type="evidence" value="ECO:0007669"/>
    <property type="project" value="UniProtKB-SubCell"/>
</dbReference>
<dbReference type="GO" id="GO:0015385">
    <property type="term" value="F:sodium:proton antiporter activity"/>
    <property type="evidence" value="ECO:0007669"/>
    <property type="project" value="TreeGrafter"/>
</dbReference>
<dbReference type="InterPro" id="IPR005133">
    <property type="entry name" value="PhaG_MnhG_YufB"/>
</dbReference>
<dbReference type="NCBIfam" id="TIGR01300">
    <property type="entry name" value="CPA3_mnhG_phaG"/>
    <property type="match status" value="1"/>
</dbReference>
<dbReference type="NCBIfam" id="NF009236">
    <property type="entry name" value="PRK12586.1"/>
    <property type="match status" value="1"/>
</dbReference>
<dbReference type="NCBIfam" id="NF009314">
    <property type="entry name" value="PRK12674.1-2"/>
    <property type="match status" value="1"/>
</dbReference>
<dbReference type="PANTHER" id="PTHR34703">
    <property type="entry name" value="ANTIPORTER SUBUNIT MNHG2-RELATED"/>
    <property type="match status" value="1"/>
</dbReference>
<dbReference type="PANTHER" id="PTHR34703:SF1">
    <property type="entry name" value="ANTIPORTER SUBUNIT MNHG2-RELATED"/>
    <property type="match status" value="1"/>
</dbReference>
<dbReference type="Pfam" id="PF03334">
    <property type="entry name" value="PhaG_MnhG_YufB"/>
    <property type="match status" value="1"/>
</dbReference>
<gene>
    <name type="primary">mnhG2</name>
    <name type="synonym">mrpG2</name>
    <name type="ordered locus">SAS0595</name>
</gene>
<proteinExistence type="inferred from homology"/>
<sequence>MEITKEIFSLIAAVMLLLGSFIALISAIGIVKFQDVFLRSHAATKSSTLSVLLTLIGVLIYFIVNTGFFSVRLLLSLVFINLTSPVGMHLVARAAYRNGAYMYRKNDAHTHASILLSSNEQNSTEALQLRAEKREEHRKKWYQND</sequence>
<feature type="chain" id="PRO_0000372177" description="Putative antiporter subunit mnhG2">
    <location>
        <begin position="1"/>
        <end position="145"/>
    </location>
</feature>
<feature type="transmembrane region" description="Helical" evidence="2">
    <location>
        <begin position="11"/>
        <end position="31"/>
    </location>
</feature>
<feature type="transmembrane region" description="Helical" evidence="2">
    <location>
        <begin position="51"/>
        <end position="71"/>
    </location>
</feature>
<feature type="transmembrane region" description="Helical" evidence="2">
    <location>
        <begin position="72"/>
        <end position="92"/>
    </location>
</feature>
<keyword id="KW-0050">Antiport</keyword>
<keyword id="KW-1003">Cell membrane</keyword>
<keyword id="KW-0406">Ion transport</keyword>
<keyword id="KW-0472">Membrane</keyword>
<keyword id="KW-0812">Transmembrane</keyword>
<keyword id="KW-1133">Transmembrane helix</keyword>
<keyword id="KW-0813">Transport</keyword>
<comment type="subunit">
    <text evidence="1">May form a heterooligomeric complex that consists of seven subunits: mnhA2, mnhB2, mnhC2, mnhD2, mnhE2, mnhF2 and mnhG2.</text>
</comment>
<comment type="subcellular location">
    <subcellularLocation>
        <location evidence="3">Cell membrane</location>
        <topology evidence="3">Multi-pass membrane protein</topology>
    </subcellularLocation>
</comment>
<comment type="similarity">
    <text evidence="3">Belongs to the CPA3 antiporters (TC 2.A.63) subunit G family.</text>
</comment>
<evidence type="ECO:0000250" key="1"/>
<evidence type="ECO:0000255" key="2"/>
<evidence type="ECO:0000305" key="3"/>
<organism>
    <name type="scientific">Staphylococcus aureus (strain MSSA476)</name>
    <dbReference type="NCBI Taxonomy" id="282459"/>
    <lineage>
        <taxon>Bacteria</taxon>
        <taxon>Bacillati</taxon>
        <taxon>Bacillota</taxon>
        <taxon>Bacilli</taxon>
        <taxon>Bacillales</taxon>
        <taxon>Staphylococcaceae</taxon>
        <taxon>Staphylococcus</taxon>
    </lineage>
</organism>